<gene>
    <name evidence="10" type="primary">TTLL1</name>
    <name type="synonym">C22orf7</name>
</gene>
<protein>
    <recommendedName>
        <fullName evidence="2">Polyglutamylase complex subunit TTLL1</fullName>
        <ecNumber evidence="2">6.3.2.-</ecNumber>
    </recommendedName>
    <alternativeName>
        <fullName>Tubulin polyglutamylase TTLL1</fullName>
    </alternativeName>
    <alternativeName>
        <fullName evidence="2">Tubulin polyglutamylase complex subunit 3</fullName>
        <shortName evidence="2">PGs3</shortName>
    </alternativeName>
    <alternativeName>
        <fullName evidence="2">Tubulin--tyrosine ligase-like protein 1</fullName>
    </alternativeName>
</protein>
<proteinExistence type="evidence at protein level"/>
<organism>
    <name type="scientific">Homo sapiens</name>
    <name type="common">Human</name>
    <dbReference type="NCBI Taxonomy" id="9606"/>
    <lineage>
        <taxon>Eukaryota</taxon>
        <taxon>Metazoa</taxon>
        <taxon>Chordata</taxon>
        <taxon>Craniata</taxon>
        <taxon>Vertebrata</taxon>
        <taxon>Euteleostomi</taxon>
        <taxon>Mammalia</taxon>
        <taxon>Eutheria</taxon>
        <taxon>Euarchontoglires</taxon>
        <taxon>Primates</taxon>
        <taxon>Haplorrhini</taxon>
        <taxon>Catarrhini</taxon>
        <taxon>Hominidae</taxon>
        <taxon>Homo</taxon>
    </lineage>
</organism>
<evidence type="ECO:0000250" key="1">
    <source>
        <dbReference type="UniProtKB" id="A4Q9E8"/>
    </source>
</evidence>
<evidence type="ECO:0000250" key="2">
    <source>
        <dbReference type="UniProtKB" id="Q91V51"/>
    </source>
</evidence>
<evidence type="ECO:0000255" key="3">
    <source>
        <dbReference type="PROSITE-ProRule" id="PRU00568"/>
    </source>
</evidence>
<evidence type="ECO:0000256" key="4">
    <source>
        <dbReference type="SAM" id="MobiDB-lite"/>
    </source>
</evidence>
<evidence type="ECO:0000269" key="5">
    <source>
    </source>
</evidence>
<evidence type="ECO:0000269" key="6">
    <source>
    </source>
</evidence>
<evidence type="ECO:0000303" key="7">
    <source>
    </source>
</evidence>
<evidence type="ECO:0000303" key="8">
    <source>
    </source>
</evidence>
<evidence type="ECO:0000305" key="9"/>
<evidence type="ECO:0000312" key="10">
    <source>
        <dbReference type="HGNC" id="HGNC:1312"/>
    </source>
</evidence>
<comment type="function">
    <text evidence="2 6">Catalytic subunit of a polyglutamylase complex which modifies tubulin, generating side chains of glutamate on the gamma-carboxyl group of specific glutamate residues within the C-terminal tail of tubulin (PubMed:34782749). Probably involved in the side-chain elongation step of the polyglutamylation reaction rather than the initiation step. Modifies both alpha- and beta-tubulins with a preference for the alpha-tail. Unlike most polyglutamylases of the tubulin--tyrosine ligase family, only displays a catalytic activity when in complex with other proteins as it is most likely lacking domains important for autonomous activity. Part of the neuronal tubulin polyglutamylase complex. Mediates cilia and flagella polyglutamylation which is essential for their biogenesis and motility. Involved in respiratory motile cilia function through the regulation of beating asymmetry. Essential for sperm flagella biogenesis, motility and male fertility. Involved in KLF4 glutamylation which impedes its ubiquitination, thereby leading to somatic cell reprogramming, pluripotency maintenance and embryogenesis.</text>
</comment>
<comment type="catalytic activity">
    <reaction evidence="2">
        <text>(L-glutamyl)(n)-gamma-L-glutamyl-L-glutamyl-[protein] + L-glutamate + ATP = (L-glutamyl)(n+1)-gamma-L-glutamyl-L-glutamyl-[protein] + ADP + phosphate + H(+)</text>
        <dbReference type="Rhea" id="RHEA:60148"/>
        <dbReference type="Rhea" id="RHEA-COMP:15519"/>
        <dbReference type="Rhea" id="RHEA-COMP:15675"/>
        <dbReference type="ChEBI" id="CHEBI:15378"/>
        <dbReference type="ChEBI" id="CHEBI:29985"/>
        <dbReference type="ChEBI" id="CHEBI:30616"/>
        <dbReference type="ChEBI" id="CHEBI:43474"/>
        <dbReference type="ChEBI" id="CHEBI:143623"/>
        <dbReference type="ChEBI" id="CHEBI:456216"/>
    </reaction>
    <physiologicalReaction direction="left-to-right" evidence="2">
        <dbReference type="Rhea" id="RHEA:60149"/>
    </physiologicalReaction>
</comment>
<comment type="cofactor">
    <cofactor evidence="1">
        <name>Mg(2+)</name>
        <dbReference type="ChEBI" id="CHEBI:18420"/>
    </cofactor>
</comment>
<comment type="subunit">
    <text evidence="2 6">Part of the neuronal tubulin polyglutamylase complex which contains TPGS1, TPGS2, TTLL1, LRRC49 and NICN1. Interacts with PCM1, CSTPP1 and LRRC49 (PubMed:34782749).</text>
</comment>
<comment type="subcellular location">
    <subcellularLocation>
        <location evidence="2">Cytoplasm</location>
        <location evidence="2">Cytoskeleton</location>
    </subcellularLocation>
    <subcellularLocation>
        <location evidence="2">Cytoplasm</location>
        <location evidence="2">Cytoskeleton</location>
        <location evidence="2">Cilium basal body</location>
    </subcellularLocation>
    <subcellularLocation>
        <location evidence="2">Cytoplasm</location>
        <location evidence="2">Cytoskeleton</location>
        <location evidence="2">Cilium axoneme</location>
    </subcellularLocation>
    <subcellularLocation>
        <location evidence="2">Cell projection</location>
        <location evidence="2">Cilium</location>
        <location evidence="2">Flagellum</location>
    </subcellularLocation>
</comment>
<comment type="alternative products">
    <event type="alternative splicing"/>
    <isoform>
        <id>O95922-1</id>
        <name>A</name>
        <name>TTLL1a</name>
        <sequence type="displayed"/>
    </isoform>
    <isoform>
        <id>O95922-2</id>
        <name>B</name>
        <name>TTLL1b</name>
        <name>Truncated</name>
        <sequence type="described" ref="VSP_006671 VSP_006672"/>
    </isoform>
    <isoform>
        <id>O95922-4</id>
        <name>4</name>
        <sequence type="described" ref="VSP_011825"/>
    </isoform>
    <text>Additional isoforms seem to exist.</text>
</comment>
<comment type="tissue specificity">
    <text evidence="5">Expressed in a wide range of tissues. Has a stronger expression in heart, brain and testis.</text>
</comment>
<comment type="domain">
    <text evidence="1">Gln-144 is the main determinant for regioselectivity, which segregates between initiases and elongases in all tubulin--tyrosine ligase family. A glutamine residue at this position is found in elongases TTLL6, TTLL9, TTLL11, TTLL13, TTLL10 and favors glutamate-chain elongation, whereas an arginine residue is found in initiases TTLL2, TTLL4, TTLL5, TTLL3, TTLL8 and favors initiation.</text>
</comment>
<comment type="similarity">
    <text evidence="9">Belongs to the tubulin polyglutamylase family.</text>
</comment>
<comment type="sequence caution" evidence="9">
    <conflict type="erroneous translation">
        <sequence resource="EMBL-CDS" id="CAB51423"/>
    </conflict>
    <text>Wrong choice of CDS.</text>
</comment>
<sequence>MAGKVKWVTDIEKSVLINNFEKRGWVQVTENEDWNFYWMSVQTIRNVFSVEAGYRLSDDQIVNHFPNHYELTRKDLMVKNIKRYRKELEKEGSPLAEKDENGKYLYLDFVPVTYMLPADYNLFVEEFRKSPSSTWIMKPCGKAQGKGIFLINKLSQIKKWSRDSKTSSFVSQSNKEAYVISLYINNPLLIGGRKFDLRLYVLVSTYRPLRCYMYKLGFCRFCTVKYTPSTSELDNMFVHLTNVAIQKHGEDYNHIHGGKWTVSNLRLYLESTRGKEVTSKLFDEIHWIIVQSLKAVAPVMNNDKHCFECYGYDIIIDDKLKPWLIEVNASPSLTSSTANDRILKYNLINDTLNIAVPNGEIPDCKWNKSPPKEVLGNYEILYDEELAQGDGADRELRSRQGQSLGPRAGRSRDSGRAVLTTWK</sequence>
<name>TTLL1_HUMAN</name>
<accession>O95922</accession>
<accession>B2RDS7</accession>
<accession>Q9BR27</accession>
<accession>Q9NRS9</accession>
<accession>Q9UMU0</accession>
<dbReference type="EC" id="6.3.2.-" evidence="2"/>
<dbReference type="EMBL" id="AF104927">
    <property type="protein sequence ID" value="AAG29879.1"/>
    <property type="molecule type" value="mRNA"/>
</dbReference>
<dbReference type="EMBL" id="AF173935">
    <property type="protein sequence ID" value="AAF91088.1"/>
    <property type="molecule type" value="mRNA"/>
</dbReference>
<dbReference type="EMBL" id="AL136687">
    <property type="protein sequence ID" value="CAB66622.1"/>
    <property type="molecule type" value="mRNA"/>
</dbReference>
<dbReference type="EMBL" id="AL096883">
    <property type="protein sequence ID" value="CAB51423.1"/>
    <property type="status" value="ALT_SEQ"/>
    <property type="molecule type" value="mRNA"/>
</dbReference>
<dbReference type="EMBL" id="AL096886">
    <property type="protein sequence ID" value="CAB51469.1"/>
    <property type="molecule type" value="mRNA"/>
</dbReference>
<dbReference type="EMBL" id="AL589867">
    <property type="protein sequence ID" value="CAC34478.1"/>
    <property type="molecule type" value="mRNA"/>
</dbReference>
<dbReference type="EMBL" id="CR456599">
    <property type="protein sequence ID" value="CAG30485.1"/>
    <property type="molecule type" value="mRNA"/>
</dbReference>
<dbReference type="EMBL" id="AK315658">
    <property type="protein sequence ID" value="BAG38024.1"/>
    <property type="molecule type" value="mRNA"/>
</dbReference>
<dbReference type="EMBL" id="AL022476">
    <property type="status" value="NOT_ANNOTATED_CDS"/>
    <property type="molecule type" value="Genomic_DNA"/>
</dbReference>
<dbReference type="EMBL" id="CH471138">
    <property type="protein sequence ID" value="EAW73279.1"/>
    <property type="molecule type" value="Genomic_DNA"/>
</dbReference>
<dbReference type="EMBL" id="BC014968">
    <property type="protein sequence ID" value="AAH14968.1"/>
    <property type="molecule type" value="mRNA"/>
</dbReference>
<dbReference type="CCDS" id="CCDS14043.1">
    <molecule id="O95922-1"/>
</dbReference>
<dbReference type="RefSeq" id="NP_036395.1">
    <molecule id="O95922-1"/>
    <property type="nucleotide sequence ID" value="NM_012263.5"/>
</dbReference>
<dbReference type="RefSeq" id="XP_011528410.1">
    <property type="nucleotide sequence ID" value="XM_011530108.2"/>
</dbReference>
<dbReference type="RefSeq" id="XP_016884240.1">
    <property type="nucleotide sequence ID" value="XM_017028751.1"/>
</dbReference>
<dbReference type="RefSeq" id="XP_016884241.1">
    <property type="nucleotide sequence ID" value="XM_017028752.1"/>
</dbReference>
<dbReference type="RefSeq" id="XP_016884242.1">
    <property type="nucleotide sequence ID" value="XM_017028753.1"/>
</dbReference>
<dbReference type="SMR" id="O95922"/>
<dbReference type="BioGRID" id="117340">
    <property type="interactions" value="26"/>
</dbReference>
<dbReference type="ComplexPortal" id="CPX-2572">
    <property type="entry name" value="Tubulin polyglutamylase complex"/>
</dbReference>
<dbReference type="FunCoup" id="O95922">
    <property type="interactions" value="134"/>
</dbReference>
<dbReference type="IntAct" id="O95922">
    <property type="interactions" value="22"/>
</dbReference>
<dbReference type="STRING" id="9606.ENSP00000266254"/>
<dbReference type="GlyGen" id="O95922">
    <property type="glycosylation" value="1 site, 1 O-linked glycan (1 site)"/>
</dbReference>
<dbReference type="iPTMnet" id="O95922"/>
<dbReference type="PhosphoSitePlus" id="O95922"/>
<dbReference type="BioMuta" id="TTLL1"/>
<dbReference type="jPOST" id="O95922"/>
<dbReference type="MassIVE" id="O95922"/>
<dbReference type="PaxDb" id="9606-ENSP00000266254"/>
<dbReference type="PeptideAtlas" id="O95922"/>
<dbReference type="ProteomicsDB" id="51124">
    <molecule id="O95922-1"/>
</dbReference>
<dbReference type="ProteomicsDB" id="51126">
    <molecule id="O95922-4"/>
</dbReference>
<dbReference type="Antibodypedia" id="27458">
    <property type="antibodies" value="43 antibodies from 18 providers"/>
</dbReference>
<dbReference type="DNASU" id="25809"/>
<dbReference type="Ensembl" id="ENST00000266254.12">
    <molecule id="O95922-1"/>
    <property type="protein sequence ID" value="ENSP00000266254.7"/>
    <property type="gene ID" value="ENSG00000100271.17"/>
</dbReference>
<dbReference type="Ensembl" id="ENST00000331018.8">
    <molecule id="O95922-4"/>
    <property type="protein sequence ID" value="ENSP00000333734.7"/>
    <property type="gene ID" value="ENSG00000100271.17"/>
</dbReference>
<dbReference type="Ensembl" id="ENST00000439248.5">
    <molecule id="O95922-2"/>
    <property type="protein sequence ID" value="ENSP00000401518.1"/>
    <property type="gene ID" value="ENSG00000100271.17"/>
</dbReference>
<dbReference type="Ensembl" id="ENST00000440761.1">
    <molecule id="O95922-2"/>
    <property type="protein sequence ID" value="ENSP00000403332.1"/>
    <property type="gene ID" value="ENSG00000100271.17"/>
</dbReference>
<dbReference type="GeneID" id="25809"/>
<dbReference type="KEGG" id="hsa:25809"/>
<dbReference type="MANE-Select" id="ENST00000266254.12">
    <property type="protein sequence ID" value="ENSP00000266254.7"/>
    <property type="RefSeq nucleotide sequence ID" value="NM_012263.5"/>
    <property type="RefSeq protein sequence ID" value="NP_036395.1"/>
</dbReference>
<dbReference type="UCSC" id="uc003bdi.5">
    <molecule id="O95922-1"/>
    <property type="organism name" value="human"/>
</dbReference>
<dbReference type="AGR" id="HGNC:1312"/>
<dbReference type="CTD" id="25809"/>
<dbReference type="DisGeNET" id="25809"/>
<dbReference type="GeneCards" id="TTLL1"/>
<dbReference type="HGNC" id="HGNC:1312">
    <property type="gene designation" value="TTLL1"/>
</dbReference>
<dbReference type="HPA" id="ENSG00000100271">
    <property type="expression patterns" value="Low tissue specificity"/>
</dbReference>
<dbReference type="MIM" id="608955">
    <property type="type" value="gene"/>
</dbReference>
<dbReference type="neXtProt" id="NX_O95922"/>
<dbReference type="OpenTargets" id="ENSG00000100271"/>
<dbReference type="PharmGKB" id="PA35030"/>
<dbReference type="VEuPathDB" id="HostDB:ENSG00000100271"/>
<dbReference type="eggNOG" id="KOG2157">
    <property type="taxonomic scope" value="Eukaryota"/>
</dbReference>
<dbReference type="GeneTree" id="ENSGT00940000156720"/>
<dbReference type="HOGENOM" id="CLU_2960116_0_0_1"/>
<dbReference type="InParanoid" id="O95922"/>
<dbReference type="OMA" id="DWNFYWS"/>
<dbReference type="OrthoDB" id="202825at2759"/>
<dbReference type="PAN-GO" id="O95922">
    <property type="GO annotations" value="5 GO annotations based on evolutionary models"/>
</dbReference>
<dbReference type="PhylomeDB" id="O95922"/>
<dbReference type="TreeFam" id="TF313087"/>
<dbReference type="PathwayCommons" id="O95922"/>
<dbReference type="Reactome" id="R-HSA-8955332">
    <property type="pathway name" value="Carboxyterminal post-translational modifications of tubulin"/>
</dbReference>
<dbReference type="SignaLink" id="O95922"/>
<dbReference type="BioGRID-ORCS" id="25809">
    <property type="hits" value="12 hits in 1145 CRISPR screens"/>
</dbReference>
<dbReference type="ChiTaRS" id="TTLL1">
    <property type="organism name" value="human"/>
</dbReference>
<dbReference type="GeneWiki" id="TTLL1"/>
<dbReference type="GenomeRNAi" id="25809"/>
<dbReference type="Pharos" id="O95922">
    <property type="development level" value="Tdark"/>
</dbReference>
<dbReference type="PRO" id="PR:O95922"/>
<dbReference type="Proteomes" id="UP000005640">
    <property type="component" value="Chromosome 22"/>
</dbReference>
<dbReference type="RNAct" id="O95922">
    <property type="molecule type" value="protein"/>
</dbReference>
<dbReference type="Bgee" id="ENSG00000100271">
    <property type="expression patterns" value="Expressed in cortical plate and 151 other cell types or tissues"/>
</dbReference>
<dbReference type="ExpressionAtlas" id="O95922">
    <property type="expression patterns" value="baseline and differential"/>
</dbReference>
<dbReference type="GO" id="GO:0036064">
    <property type="term" value="C:ciliary basal body"/>
    <property type="evidence" value="ECO:0000318"/>
    <property type="project" value="GO_Central"/>
</dbReference>
<dbReference type="GO" id="GO:0005737">
    <property type="term" value="C:cytoplasm"/>
    <property type="evidence" value="ECO:0007669"/>
    <property type="project" value="UniProtKB-KW"/>
</dbReference>
<dbReference type="GO" id="GO:0005576">
    <property type="term" value="C:extracellular region"/>
    <property type="evidence" value="ECO:0007669"/>
    <property type="project" value="GOC"/>
</dbReference>
<dbReference type="GO" id="GO:0005874">
    <property type="term" value="C:microtubule"/>
    <property type="evidence" value="ECO:0000314"/>
    <property type="project" value="UniProt"/>
</dbReference>
<dbReference type="GO" id="GO:0031514">
    <property type="term" value="C:motile cilium"/>
    <property type="evidence" value="ECO:0007669"/>
    <property type="project" value="UniProtKB-SubCell"/>
</dbReference>
<dbReference type="GO" id="GO:0005524">
    <property type="term" value="F:ATP binding"/>
    <property type="evidence" value="ECO:0007669"/>
    <property type="project" value="UniProtKB-KW"/>
</dbReference>
<dbReference type="GO" id="GO:0046872">
    <property type="term" value="F:metal ion binding"/>
    <property type="evidence" value="ECO:0007669"/>
    <property type="project" value="UniProtKB-KW"/>
</dbReference>
<dbReference type="GO" id="GO:0106438">
    <property type="term" value="F:protein-glutamic acid ligase activity, elongating"/>
    <property type="evidence" value="ECO:0007669"/>
    <property type="project" value="RHEA"/>
</dbReference>
<dbReference type="GO" id="GO:0015631">
    <property type="term" value="F:tubulin binding"/>
    <property type="evidence" value="ECO:0000318"/>
    <property type="project" value="GO_Central"/>
</dbReference>
<dbReference type="GO" id="GO:0070740">
    <property type="term" value="F:tubulin-glutamic acid ligase activity"/>
    <property type="evidence" value="ECO:0000314"/>
    <property type="project" value="UniProt"/>
</dbReference>
<dbReference type="GO" id="GO:0021702">
    <property type="term" value="P:cerebellar Purkinje cell differentiation"/>
    <property type="evidence" value="ECO:0007669"/>
    <property type="project" value="Ensembl"/>
</dbReference>
<dbReference type="GO" id="GO:0002395">
    <property type="term" value="P:immune response in nasopharyngeal-associated lymphoid tissue"/>
    <property type="evidence" value="ECO:0007669"/>
    <property type="project" value="Ensembl"/>
</dbReference>
<dbReference type="GO" id="GO:0000226">
    <property type="term" value="P:microtubule cytoskeleton organization"/>
    <property type="evidence" value="ECO:0000314"/>
    <property type="project" value="UniProt"/>
</dbReference>
<dbReference type="GO" id="GO:0120197">
    <property type="term" value="P:mucociliary clearance"/>
    <property type="evidence" value="ECO:0007669"/>
    <property type="project" value="Ensembl"/>
</dbReference>
<dbReference type="GO" id="GO:0018095">
    <property type="term" value="P:protein polyglutamylation"/>
    <property type="evidence" value="ECO:0000304"/>
    <property type="project" value="UniProtKB"/>
</dbReference>
<dbReference type="GO" id="GO:0120222">
    <property type="term" value="P:regulation of blastocyst development"/>
    <property type="evidence" value="ECO:0007669"/>
    <property type="project" value="Ensembl"/>
</dbReference>
<dbReference type="GO" id="GO:0007288">
    <property type="term" value="P:sperm axoneme assembly"/>
    <property type="evidence" value="ECO:0000318"/>
    <property type="project" value="GO_Central"/>
</dbReference>
<dbReference type="FunFam" id="3.30.470.20:FF:000033">
    <property type="entry name" value="Probable tubulin polyglutamylase TTLL1"/>
    <property type="match status" value="1"/>
</dbReference>
<dbReference type="Gene3D" id="3.30.470.20">
    <property type="entry name" value="ATP-grasp fold, B domain"/>
    <property type="match status" value="1"/>
</dbReference>
<dbReference type="InterPro" id="IPR004344">
    <property type="entry name" value="TTL/TTLL_fam"/>
</dbReference>
<dbReference type="PANTHER" id="PTHR12241:SF31">
    <property type="entry name" value="POLYGLUTAMYLASE COMPLEX SUBUNIT TTLL1"/>
    <property type="match status" value="1"/>
</dbReference>
<dbReference type="PANTHER" id="PTHR12241">
    <property type="entry name" value="TUBULIN POLYGLUTAMYLASE"/>
    <property type="match status" value="1"/>
</dbReference>
<dbReference type="Pfam" id="PF03133">
    <property type="entry name" value="TTL"/>
    <property type="match status" value="1"/>
</dbReference>
<dbReference type="SUPFAM" id="SSF56059">
    <property type="entry name" value="Glutathione synthetase ATP-binding domain-like"/>
    <property type="match status" value="1"/>
</dbReference>
<dbReference type="PROSITE" id="PS51221">
    <property type="entry name" value="TTL"/>
    <property type="match status" value="1"/>
</dbReference>
<keyword id="KW-0025">Alternative splicing</keyword>
<keyword id="KW-0067">ATP-binding</keyword>
<keyword id="KW-0966">Cell projection</keyword>
<keyword id="KW-0969">Cilium</keyword>
<keyword id="KW-0963">Cytoplasm</keyword>
<keyword id="KW-0206">Cytoskeleton</keyword>
<keyword id="KW-0282">Flagellum</keyword>
<keyword id="KW-0436">Ligase</keyword>
<keyword id="KW-0460">Magnesium</keyword>
<keyword id="KW-0479">Metal-binding</keyword>
<keyword id="KW-0493">Microtubule</keyword>
<keyword id="KW-0547">Nucleotide-binding</keyword>
<keyword id="KW-1267">Proteomics identification</keyword>
<keyword id="KW-1185">Reference proteome</keyword>
<reference key="1">
    <citation type="journal article" date="2000" name="Gene">
        <title>Characterization of the human tubulin tyrosine ligase-like 1 gene (TTLL1) mapping to 22q13.1.</title>
        <authorList>
            <person name="Trichet V."/>
            <person name="Ruault M."/>
            <person name="Roizes G."/>
            <person name="De Sario A."/>
        </authorList>
    </citation>
    <scope>NUCLEOTIDE SEQUENCE [MRNA] (ISOFORMS A AND B)</scope>
    <scope>TISSUE SPECIFICITY</scope>
</reference>
<reference key="2">
    <citation type="journal article" date="2001" name="Genome Res.">
        <title>Towards a catalog of human genes and proteins: sequencing and analysis of 500 novel complete protein coding human cDNAs.</title>
        <authorList>
            <person name="Wiemann S."/>
            <person name="Weil B."/>
            <person name="Wellenreuther R."/>
            <person name="Gassenhuber J."/>
            <person name="Glassl S."/>
            <person name="Ansorge W."/>
            <person name="Boecher M."/>
            <person name="Bloecker H."/>
            <person name="Bauersachs S."/>
            <person name="Blum H."/>
            <person name="Lauber J."/>
            <person name="Duesterhoeft A."/>
            <person name="Beyer A."/>
            <person name="Koehrer K."/>
            <person name="Strack N."/>
            <person name="Mewes H.-W."/>
            <person name="Ottenwaelder B."/>
            <person name="Obermaier B."/>
            <person name="Tampe J."/>
            <person name="Heubner D."/>
            <person name="Wambutt R."/>
            <person name="Korn B."/>
            <person name="Klein M."/>
            <person name="Poustka A."/>
        </authorList>
    </citation>
    <scope>NUCLEOTIDE SEQUENCE [LARGE SCALE MRNA] (ISOFORM A)</scope>
    <source>
        <tissue>Brain</tissue>
    </source>
</reference>
<reference key="3">
    <citation type="journal article" date="2003" name="Genome Res.">
        <title>Reevaluating human gene annotation: a second-generation analysis of chromosome 22.</title>
        <authorList>
            <person name="Collins J.E."/>
            <person name="Goward M.E."/>
            <person name="Cole C.G."/>
            <person name="Smink L.J."/>
            <person name="Huckle E.J."/>
            <person name="Knowles S."/>
            <person name="Bye J.M."/>
            <person name="Beare D.M."/>
            <person name="Dunham I."/>
        </authorList>
    </citation>
    <scope>NUCLEOTIDE SEQUENCE [LARGE SCALE MRNA] (ISOFORMS A; B AND 4)</scope>
</reference>
<reference key="4">
    <citation type="journal article" date="2004" name="Genome Biol.">
        <title>A genome annotation-driven approach to cloning the human ORFeome.</title>
        <authorList>
            <person name="Collins J.E."/>
            <person name="Wright C.L."/>
            <person name="Edwards C.A."/>
            <person name="Davis M.P."/>
            <person name="Grinham J.A."/>
            <person name="Cole C.G."/>
            <person name="Goward M.E."/>
            <person name="Aguado B."/>
            <person name="Mallya M."/>
            <person name="Mokrab Y."/>
            <person name="Huckle E.J."/>
            <person name="Beare D.M."/>
            <person name="Dunham I."/>
        </authorList>
    </citation>
    <scope>NUCLEOTIDE SEQUENCE [LARGE SCALE MRNA] (ISOFORM A)</scope>
</reference>
<reference key="5">
    <citation type="journal article" date="2004" name="Nat. Genet.">
        <title>Complete sequencing and characterization of 21,243 full-length human cDNAs.</title>
        <authorList>
            <person name="Ota T."/>
            <person name="Suzuki Y."/>
            <person name="Nishikawa T."/>
            <person name="Otsuki T."/>
            <person name="Sugiyama T."/>
            <person name="Irie R."/>
            <person name="Wakamatsu A."/>
            <person name="Hayashi K."/>
            <person name="Sato H."/>
            <person name="Nagai K."/>
            <person name="Kimura K."/>
            <person name="Makita H."/>
            <person name="Sekine M."/>
            <person name="Obayashi M."/>
            <person name="Nishi T."/>
            <person name="Shibahara T."/>
            <person name="Tanaka T."/>
            <person name="Ishii S."/>
            <person name="Yamamoto J."/>
            <person name="Saito K."/>
            <person name="Kawai Y."/>
            <person name="Isono Y."/>
            <person name="Nakamura Y."/>
            <person name="Nagahari K."/>
            <person name="Murakami K."/>
            <person name="Yasuda T."/>
            <person name="Iwayanagi T."/>
            <person name="Wagatsuma M."/>
            <person name="Shiratori A."/>
            <person name="Sudo H."/>
            <person name="Hosoiri T."/>
            <person name="Kaku Y."/>
            <person name="Kodaira H."/>
            <person name="Kondo H."/>
            <person name="Sugawara M."/>
            <person name="Takahashi M."/>
            <person name="Kanda K."/>
            <person name="Yokoi T."/>
            <person name="Furuya T."/>
            <person name="Kikkawa E."/>
            <person name="Omura Y."/>
            <person name="Abe K."/>
            <person name="Kamihara K."/>
            <person name="Katsuta N."/>
            <person name="Sato K."/>
            <person name="Tanikawa M."/>
            <person name="Yamazaki M."/>
            <person name="Ninomiya K."/>
            <person name="Ishibashi T."/>
            <person name="Yamashita H."/>
            <person name="Murakawa K."/>
            <person name="Fujimori K."/>
            <person name="Tanai H."/>
            <person name="Kimata M."/>
            <person name="Watanabe M."/>
            <person name="Hiraoka S."/>
            <person name="Chiba Y."/>
            <person name="Ishida S."/>
            <person name="Ono Y."/>
            <person name="Takiguchi S."/>
            <person name="Watanabe S."/>
            <person name="Yosida M."/>
            <person name="Hotuta T."/>
            <person name="Kusano J."/>
            <person name="Kanehori K."/>
            <person name="Takahashi-Fujii A."/>
            <person name="Hara H."/>
            <person name="Tanase T.-O."/>
            <person name="Nomura Y."/>
            <person name="Togiya S."/>
            <person name="Komai F."/>
            <person name="Hara R."/>
            <person name="Takeuchi K."/>
            <person name="Arita M."/>
            <person name="Imose N."/>
            <person name="Musashino K."/>
            <person name="Yuuki H."/>
            <person name="Oshima A."/>
            <person name="Sasaki N."/>
            <person name="Aotsuka S."/>
            <person name="Yoshikawa Y."/>
            <person name="Matsunawa H."/>
            <person name="Ichihara T."/>
            <person name="Shiohata N."/>
            <person name="Sano S."/>
            <person name="Moriya S."/>
            <person name="Momiyama H."/>
            <person name="Satoh N."/>
            <person name="Takami S."/>
            <person name="Terashima Y."/>
            <person name="Suzuki O."/>
            <person name="Nakagawa S."/>
            <person name="Senoh A."/>
            <person name="Mizoguchi H."/>
            <person name="Goto Y."/>
            <person name="Shimizu F."/>
            <person name="Wakebe H."/>
            <person name="Hishigaki H."/>
            <person name="Watanabe T."/>
            <person name="Sugiyama A."/>
            <person name="Takemoto M."/>
            <person name="Kawakami B."/>
            <person name="Yamazaki M."/>
            <person name="Watanabe K."/>
            <person name="Kumagai A."/>
            <person name="Itakura S."/>
            <person name="Fukuzumi Y."/>
            <person name="Fujimori Y."/>
            <person name="Komiyama M."/>
            <person name="Tashiro H."/>
            <person name="Tanigami A."/>
            <person name="Fujiwara T."/>
            <person name="Ono T."/>
            <person name="Yamada K."/>
            <person name="Fujii Y."/>
            <person name="Ozaki K."/>
            <person name="Hirao M."/>
            <person name="Ohmori Y."/>
            <person name="Kawabata A."/>
            <person name="Hikiji T."/>
            <person name="Kobatake N."/>
            <person name="Inagaki H."/>
            <person name="Ikema Y."/>
            <person name="Okamoto S."/>
            <person name="Okitani R."/>
            <person name="Kawakami T."/>
            <person name="Noguchi S."/>
            <person name="Itoh T."/>
            <person name="Shigeta K."/>
            <person name="Senba T."/>
            <person name="Matsumura K."/>
            <person name="Nakajima Y."/>
            <person name="Mizuno T."/>
            <person name="Morinaga M."/>
            <person name="Sasaki M."/>
            <person name="Togashi T."/>
            <person name="Oyama M."/>
            <person name="Hata H."/>
            <person name="Watanabe M."/>
            <person name="Komatsu T."/>
            <person name="Mizushima-Sugano J."/>
            <person name="Satoh T."/>
            <person name="Shirai Y."/>
            <person name="Takahashi Y."/>
            <person name="Nakagawa K."/>
            <person name="Okumura K."/>
            <person name="Nagase T."/>
            <person name="Nomura N."/>
            <person name="Kikuchi H."/>
            <person name="Masuho Y."/>
            <person name="Yamashita R."/>
            <person name="Nakai K."/>
            <person name="Yada T."/>
            <person name="Nakamura Y."/>
            <person name="Ohara O."/>
            <person name="Isogai T."/>
            <person name="Sugano S."/>
        </authorList>
    </citation>
    <scope>NUCLEOTIDE SEQUENCE [LARGE SCALE MRNA] (ISOFORM A)</scope>
    <source>
        <tissue>Testis</tissue>
    </source>
</reference>
<reference key="6">
    <citation type="journal article" date="1999" name="Nature">
        <title>The DNA sequence of human chromosome 22.</title>
        <authorList>
            <person name="Dunham I."/>
            <person name="Hunt A.R."/>
            <person name="Collins J.E."/>
            <person name="Bruskiewich R."/>
            <person name="Beare D.M."/>
            <person name="Clamp M."/>
            <person name="Smink L.J."/>
            <person name="Ainscough R."/>
            <person name="Almeida J.P."/>
            <person name="Babbage A.K."/>
            <person name="Bagguley C."/>
            <person name="Bailey J."/>
            <person name="Barlow K.F."/>
            <person name="Bates K.N."/>
            <person name="Beasley O.P."/>
            <person name="Bird C.P."/>
            <person name="Blakey S.E."/>
            <person name="Bridgeman A.M."/>
            <person name="Buck D."/>
            <person name="Burgess J."/>
            <person name="Burrill W.D."/>
            <person name="Burton J."/>
            <person name="Carder C."/>
            <person name="Carter N.P."/>
            <person name="Chen Y."/>
            <person name="Clark G."/>
            <person name="Clegg S.M."/>
            <person name="Cobley V.E."/>
            <person name="Cole C.G."/>
            <person name="Collier R.E."/>
            <person name="Connor R."/>
            <person name="Conroy D."/>
            <person name="Corby N.R."/>
            <person name="Coville G.J."/>
            <person name="Cox A.V."/>
            <person name="Davis J."/>
            <person name="Dawson E."/>
            <person name="Dhami P.D."/>
            <person name="Dockree C."/>
            <person name="Dodsworth S.J."/>
            <person name="Durbin R.M."/>
            <person name="Ellington A.G."/>
            <person name="Evans K.L."/>
            <person name="Fey J.M."/>
            <person name="Fleming K."/>
            <person name="French L."/>
            <person name="Garner A.A."/>
            <person name="Gilbert J.G.R."/>
            <person name="Goward M.E."/>
            <person name="Grafham D.V."/>
            <person name="Griffiths M.N.D."/>
            <person name="Hall C."/>
            <person name="Hall R.E."/>
            <person name="Hall-Tamlyn G."/>
            <person name="Heathcott R.W."/>
            <person name="Ho S."/>
            <person name="Holmes S."/>
            <person name="Hunt S.E."/>
            <person name="Jones M.C."/>
            <person name="Kershaw J."/>
            <person name="Kimberley A.M."/>
            <person name="King A."/>
            <person name="Laird G.K."/>
            <person name="Langford C.F."/>
            <person name="Leversha M.A."/>
            <person name="Lloyd C."/>
            <person name="Lloyd D.M."/>
            <person name="Martyn I.D."/>
            <person name="Mashreghi-Mohammadi M."/>
            <person name="Matthews L.H."/>
            <person name="Mccann O.T."/>
            <person name="Mcclay J."/>
            <person name="Mclaren S."/>
            <person name="McMurray A.A."/>
            <person name="Milne S.A."/>
            <person name="Mortimore B.J."/>
            <person name="Odell C.N."/>
            <person name="Pavitt R."/>
            <person name="Pearce A.V."/>
            <person name="Pearson D."/>
            <person name="Phillimore B.J.C.T."/>
            <person name="Phillips S.H."/>
            <person name="Plumb R.W."/>
            <person name="Ramsay H."/>
            <person name="Ramsey Y."/>
            <person name="Rogers L."/>
            <person name="Ross M.T."/>
            <person name="Scott C.E."/>
            <person name="Sehra H.K."/>
            <person name="Skuce C.D."/>
            <person name="Smalley S."/>
            <person name="Smith M.L."/>
            <person name="Soderlund C."/>
            <person name="Spragon L."/>
            <person name="Steward C.A."/>
            <person name="Sulston J.E."/>
            <person name="Swann R.M."/>
            <person name="Vaudin M."/>
            <person name="Wall M."/>
            <person name="Wallis J.M."/>
            <person name="Whiteley M.N."/>
            <person name="Willey D.L."/>
            <person name="Williams L."/>
            <person name="Williams S.A."/>
            <person name="Williamson H."/>
            <person name="Wilmer T.E."/>
            <person name="Wilming L."/>
            <person name="Wright C.L."/>
            <person name="Hubbard T."/>
            <person name="Bentley D.R."/>
            <person name="Beck S."/>
            <person name="Rogers J."/>
            <person name="Shimizu N."/>
            <person name="Minoshima S."/>
            <person name="Kawasaki K."/>
            <person name="Sasaki T."/>
            <person name="Asakawa S."/>
            <person name="Kudoh J."/>
            <person name="Shintani A."/>
            <person name="Shibuya K."/>
            <person name="Yoshizaki Y."/>
            <person name="Aoki N."/>
            <person name="Mitsuyama S."/>
            <person name="Roe B.A."/>
            <person name="Chen F."/>
            <person name="Chu L."/>
            <person name="Crabtree J."/>
            <person name="Deschamps S."/>
            <person name="Do A."/>
            <person name="Do T."/>
            <person name="Dorman A."/>
            <person name="Fang F."/>
            <person name="Fu Y."/>
            <person name="Hu P."/>
            <person name="Hua A."/>
            <person name="Kenton S."/>
            <person name="Lai H."/>
            <person name="Lao H.I."/>
            <person name="Lewis J."/>
            <person name="Lewis S."/>
            <person name="Lin S.-P."/>
            <person name="Loh P."/>
            <person name="Malaj E."/>
            <person name="Nguyen T."/>
            <person name="Pan H."/>
            <person name="Phan S."/>
            <person name="Qi S."/>
            <person name="Qian Y."/>
            <person name="Ray L."/>
            <person name="Ren Q."/>
            <person name="Shaull S."/>
            <person name="Sloan D."/>
            <person name="Song L."/>
            <person name="Wang Q."/>
            <person name="Wang Y."/>
            <person name="Wang Z."/>
            <person name="White J."/>
            <person name="Willingham D."/>
            <person name="Wu H."/>
            <person name="Yao Z."/>
            <person name="Zhan M."/>
            <person name="Zhang G."/>
            <person name="Chissoe S."/>
            <person name="Murray J."/>
            <person name="Miller N."/>
            <person name="Minx P."/>
            <person name="Fulton R."/>
            <person name="Johnson D."/>
            <person name="Bemis G."/>
            <person name="Bentley D."/>
            <person name="Bradshaw H."/>
            <person name="Bourne S."/>
            <person name="Cordes M."/>
            <person name="Du Z."/>
            <person name="Fulton L."/>
            <person name="Goela D."/>
            <person name="Graves T."/>
            <person name="Hawkins J."/>
            <person name="Hinds K."/>
            <person name="Kemp K."/>
            <person name="Latreille P."/>
            <person name="Layman D."/>
            <person name="Ozersky P."/>
            <person name="Rohlfing T."/>
            <person name="Scheet P."/>
            <person name="Walker C."/>
            <person name="Wamsley A."/>
            <person name="Wohldmann P."/>
            <person name="Pepin K."/>
            <person name="Nelson J."/>
            <person name="Korf I."/>
            <person name="Bedell J.A."/>
            <person name="Hillier L.W."/>
            <person name="Mardis E."/>
            <person name="Waterston R."/>
            <person name="Wilson R."/>
            <person name="Emanuel B.S."/>
            <person name="Shaikh T."/>
            <person name="Kurahashi H."/>
            <person name="Saitta S."/>
            <person name="Budarf M.L."/>
            <person name="McDermid H.E."/>
            <person name="Johnson A."/>
            <person name="Wong A.C.C."/>
            <person name="Morrow B.E."/>
            <person name="Edelmann L."/>
            <person name="Kim U.J."/>
            <person name="Shizuya H."/>
            <person name="Simon M.I."/>
            <person name="Dumanski J.P."/>
            <person name="Peyrard M."/>
            <person name="Kedra D."/>
            <person name="Seroussi E."/>
            <person name="Fransson I."/>
            <person name="Tapia I."/>
            <person name="Bruder C.E."/>
            <person name="O'Brien K.P."/>
            <person name="Wilkinson P."/>
            <person name="Bodenteich A."/>
            <person name="Hartman K."/>
            <person name="Hu X."/>
            <person name="Khan A.S."/>
            <person name="Lane L."/>
            <person name="Tilahun Y."/>
            <person name="Wright H."/>
        </authorList>
    </citation>
    <scope>NUCLEOTIDE SEQUENCE [LARGE SCALE GENOMIC DNA]</scope>
</reference>
<reference key="7">
    <citation type="submission" date="2005-07" db="EMBL/GenBank/DDBJ databases">
        <authorList>
            <person name="Mural R.J."/>
            <person name="Istrail S."/>
            <person name="Sutton G.G."/>
            <person name="Florea L."/>
            <person name="Halpern A.L."/>
            <person name="Mobarry C.M."/>
            <person name="Lippert R."/>
            <person name="Walenz B."/>
            <person name="Shatkay H."/>
            <person name="Dew I."/>
            <person name="Miller J.R."/>
            <person name="Flanigan M.J."/>
            <person name="Edwards N.J."/>
            <person name="Bolanos R."/>
            <person name="Fasulo D."/>
            <person name="Halldorsson B.V."/>
            <person name="Hannenhalli S."/>
            <person name="Turner R."/>
            <person name="Yooseph S."/>
            <person name="Lu F."/>
            <person name="Nusskern D.R."/>
            <person name="Shue B.C."/>
            <person name="Zheng X.H."/>
            <person name="Zhong F."/>
            <person name="Delcher A.L."/>
            <person name="Huson D.H."/>
            <person name="Kravitz S.A."/>
            <person name="Mouchard L."/>
            <person name="Reinert K."/>
            <person name="Remington K.A."/>
            <person name="Clark A.G."/>
            <person name="Waterman M.S."/>
            <person name="Eichler E.E."/>
            <person name="Adams M.D."/>
            <person name="Hunkapiller M.W."/>
            <person name="Myers E.W."/>
            <person name="Venter J.C."/>
        </authorList>
    </citation>
    <scope>NUCLEOTIDE SEQUENCE [LARGE SCALE GENOMIC DNA]</scope>
</reference>
<reference key="8">
    <citation type="journal article" date="2004" name="Genome Res.">
        <title>The status, quality, and expansion of the NIH full-length cDNA project: the Mammalian Gene Collection (MGC).</title>
        <authorList>
            <consortium name="The MGC Project Team"/>
        </authorList>
    </citation>
    <scope>NUCLEOTIDE SEQUENCE [LARGE SCALE MRNA] (ISOFORM A)</scope>
    <source>
        <tissue>Eye</tissue>
    </source>
</reference>
<reference key="9">
    <citation type="journal article" date="2022" name="Cell Res.">
        <title>Regulators of tubulin polyglutamylation control nuclear shape and cilium disassembly by balancing microtubule and actin assembly.</title>
        <authorList>
            <person name="Wang L."/>
            <person name="Paudyal S.C."/>
            <person name="Kang Y."/>
            <person name="Owa M."/>
            <person name="Liang F.X."/>
            <person name="Spektor A."/>
            <person name="Knaut H."/>
            <person name="Sanchez I."/>
            <person name="Dynlacht B.D."/>
        </authorList>
    </citation>
    <scope>INTERACTION WITH PCM1; CSTPP1 AND LRRC49</scope>
    <scope>FUNCTION</scope>
    <scope>MUTAGENESIS OF GLU-326</scope>
</reference>
<feature type="chain" id="PRO_0000212438" description="Polyglutamylase complex subunit TTLL1">
    <location>
        <begin position="1"/>
        <end position="423"/>
    </location>
</feature>
<feature type="domain" description="TTL" evidence="3">
    <location>
        <begin position="1"/>
        <end position="367"/>
    </location>
</feature>
<feature type="region of interest" description="Disordered" evidence="4">
    <location>
        <begin position="391"/>
        <end position="423"/>
    </location>
</feature>
<feature type="binding site" evidence="1">
    <location>
        <position position="138"/>
    </location>
    <ligand>
        <name>ATP</name>
        <dbReference type="ChEBI" id="CHEBI:30616"/>
    </ligand>
</feature>
<feature type="binding site" evidence="1">
    <location>
        <begin position="144"/>
        <end position="145"/>
    </location>
    <ligand>
        <name>ATP</name>
        <dbReference type="ChEBI" id="CHEBI:30616"/>
    </ligand>
</feature>
<feature type="binding site" evidence="1">
    <location>
        <position position="144"/>
    </location>
    <ligand>
        <name>a protein</name>
        <dbReference type="ChEBI" id="CHEBI:16541"/>
    </ligand>
    <ligandPart>
        <name>L-glutamate residue</name>
        <dbReference type="ChEBI" id="CHEBI:29973"/>
        <note>L-glutamate acceptor residue in protein target</note>
    </ligandPart>
</feature>
<feature type="binding site" evidence="1">
    <location>
        <begin position="181"/>
        <end position="184"/>
    </location>
    <ligand>
        <name>ATP</name>
        <dbReference type="ChEBI" id="CHEBI:30616"/>
    </ligand>
</feature>
<feature type="binding site" evidence="1">
    <location>
        <begin position="194"/>
        <end position="196"/>
    </location>
    <ligand>
        <name>ATP</name>
        <dbReference type="ChEBI" id="CHEBI:30616"/>
    </ligand>
</feature>
<feature type="binding site" evidence="1">
    <location>
        <position position="220"/>
    </location>
    <ligand>
        <name>L-glutamate</name>
        <dbReference type="ChEBI" id="CHEBI:29985"/>
    </ligand>
</feature>
<feature type="binding site" evidence="1">
    <location>
        <begin position="241"/>
        <end position="242"/>
    </location>
    <ligand>
        <name>ATP</name>
        <dbReference type="ChEBI" id="CHEBI:30616"/>
    </ligand>
</feature>
<feature type="binding site" evidence="1">
    <location>
        <position position="259"/>
    </location>
    <ligand>
        <name>L-glutamate</name>
        <dbReference type="ChEBI" id="CHEBI:29985"/>
    </ligand>
</feature>
<feature type="binding site" evidence="1">
    <location>
        <position position="313"/>
    </location>
    <ligand>
        <name>Mg(2+)</name>
        <dbReference type="ChEBI" id="CHEBI:18420"/>
        <label>1</label>
    </ligand>
</feature>
<feature type="binding site" evidence="1">
    <location>
        <position position="326"/>
    </location>
    <ligand>
        <name>Mg(2+)</name>
        <dbReference type="ChEBI" id="CHEBI:18420"/>
        <label>1</label>
    </ligand>
</feature>
<feature type="binding site" evidence="1">
    <location>
        <position position="326"/>
    </location>
    <ligand>
        <name>Mg(2+)</name>
        <dbReference type="ChEBI" id="CHEBI:18420"/>
        <label>2</label>
    </ligand>
</feature>
<feature type="binding site" evidence="1">
    <location>
        <position position="328"/>
    </location>
    <ligand>
        <name>Mg(2+)</name>
        <dbReference type="ChEBI" id="CHEBI:18420"/>
        <label>2</label>
    </ligand>
</feature>
<feature type="binding site" evidence="1">
    <location>
        <position position="344"/>
    </location>
    <ligand>
        <name>L-glutamate</name>
        <dbReference type="ChEBI" id="CHEBI:29985"/>
    </ligand>
</feature>
<feature type="site" description="Essential for specifying alpha-elongation versus initiation step of the polyglutamylase activity" evidence="1">
    <location>
        <position position="144"/>
    </location>
</feature>
<feature type="splice variant" id="VSP_006671" description="In isoform B." evidence="7 8">
    <original>MSVQTIRNVFSVEAGYRLSDD</original>
    <variation>LLDLPEFRYRSCLNEFPDFRV</variation>
    <location>
        <begin position="39"/>
        <end position="59"/>
    </location>
</feature>
<feature type="splice variant" id="VSP_006672" description="In isoform B." evidence="7 8">
    <location>
        <begin position="60"/>
        <end position="423"/>
    </location>
</feature>
<feature type="splice variant" id="VSP_011825" description="In isoform 4." evidence="8">
    <location>
        <begin position="298"/>
        <end position="326"/>
    </location>
</feature>
<feature type="sequence variant" id="VAR_052409" description="In dbSNP:rs6003030.">
    <original>S</original>
    <variation>L</variation>
    <location>
        <position position="168"/>
    </location>
</feature>
<feature type="mutagenesis site" description="Abolishes microtubule polyglutamylation. Decreases MAP4 recruitment to microtubules." evidence="6">
    <original>E</original>
    <variation>G</variation>
    <location>
        <position position="326"/>
    </location>
</feature>